<organism>
    <name type="scientific">Aspergillus flavus (strain ATCC 200026 / FGSC A1120 / IAM 13836 / NRRL 3357 / JCM 12722 / SRRC 167)</name>
    <dbReference type="NCBI Taxonomy" id="332952"/>
    <lineage>
        <taxon>Eukaryota</taxon>
        <taxon>Fungi</taxon>
        <taxon>Dikarya</taxon>
        <taxon>Ascomycota</taxon>
        <taxon>Pezizomycotina</taxon>
        <taxon>Eurotiomycetes</taxon>
        <taxon>Eurotiomycetidae</taxon>
        <taxon>Eurotiales</taxon>
        <taxon>Aspergillaceae</taxon>
        <taxon>Aspergillus</taxon>
        <taxon>Aspergillus subgen. Circumdati</taxon>
    </lineage>
</organism>
<keyword id="KW-0106">Calcium</keyword>
<keyword id="KW-0119">Carbohydrate metabolism</keyword>
<keyword id="KW-1015">Disulfide bond</keyword>
<keyword id="KW-0325">Glycoprotein</keyword>
<keyword id="KW-0378">Hydrolase</keyword>
<keyword id="KW-0479">Metal-binding</keyword>
<keyword id="KW-0624">Polysaccharide degradation</keyword>
<keyword id="KW-0964">Secreted</keyword>
<keyword id="KW-0719">Serine esterase</keyword>
<keyword id="KW-0732">Signal</keyword>
<keyword id="KW-0858">Xylan degradation</keyword>
<dbReference type="EC" id="3.1.1.73" evidence="3"/>
<dbReference type="EMBL" id="EQ963482">
    <property type="protein sequence ID" value="EED47503.1"/>
    <property type="molecule type" value="Genomic_DNA"/>
</dbReference>
<dbReference type="RefSeq" id="XP_002382345.1">
    <property type="nucleotide sequence ID" value="XM_002382304.1"/>
</dbReference>
<dbReference type="SMR" id="B8NPT0"/>
<dbReference type="ESTHER" id="aspor-q2ubd6">
    <property type="family name" value="Tannase"/>
</dbReference>
<dbReference type="GlyCosmos" id="B8NPT0">
    <property type="glycosylation" value="7 sites, No reported glycans"/>
</dbReference>
<dbReference type="EnsemblFungi" id="EED47503">
    <property type="protein sequence ID" value="EED47503"/>
    <property type="gene ID" value="AFLA_001440"/>
</dbReference>
<dbReference type="VEuPathDB" id="FungiDB:AFLA_011465"/>
<dbReference type="eggNOG" id="ENOG502SHYE">
    <property type="taxonomic scope" value="Eukaryota"/>
</dbReference>
<dbReference type="HOGENOM" id="CLU_014819_1_0_1"/>
<dbReference type="OMA" id="HCNSGPG"/>
<dbReference type="GO" id="GO:0005576">
    <property type="term" value="C:extracellular region"/>
    <property type="evidence" value="ECO:0007669"/>
    <property type="project" value="UniProtKB-SubCell"/>
</dbReference>
<dbReference type="GO" id="GO:0030600">
    <property type="term" value="F:feruloyl esterase activity"/>
    <property type="evidence" value="ECO:0007669"/>
    <property type="project" value="UniProtKB-EC"/>
</dbReference>
<dbReference type="GO" id="GO:0046872">
    <property type="term" value="F:metal ion binding"/>
    <property type="evidence" value="ECO:0007669"/>
    <property type="project" value="UniProtKB-KW"/>
</dbReference>
<dbReference type="GO" id="GO:0045493">
    <property type="term" value="P:xylan catabolic process"/>
    <property type="evidence" value="ECO:0007669"/>
    <property type="project" value="UniProtKB-KW"/>
</dbReference>
<dbReference type="Gene3D" id="3.40.50.1820">
    <property type="entry name" value="alpha/beta hydrolase"/>
    <property type="match status" value="1"/>
</dbReference>
<dbReference type="InterPro" id="IPR029058">
    <property type="entry name" value="AB_hydrolase_fold"/>
</dbReference>
<dbReference type="InterPro" id="IPR011118">
    <property type="entry name" value="Tannase/feruloyl_esterase"/>
</dbReference>
<dbReference type="PANTHER" id="PTHR33938">
    <property type="entry name" value="FERULOYL ESTERASE B-RELATED"/>
    <property type="match status" value="1"/>
</dbReference>
<dbReference type="PANTHER" id="PTHR33938:SF15">
    <property type="entry name" value="FERULOYL ESTERASE B-RELATED"/>
    <property type="match status" value="1"/>
</dbReference>
<dbReference type="Pfam" id="PF07519">
    <property type="entry name" value="Tannase"/>
    <property type="match status" value="1"/>
</dbReference>
<dbReference type="SUPFAM" id="SSF53474">
    <property type="entry name" value="alpha/beta-Hydrolases"/>
    <property type="match status" value="1"/>
</dbReference>
<gene>
    <name type="primary">faeB-2</name>
    <name type="ORF">AFLA_001440</name>
</gene>
<accession>B8NPT0</accession>
<reference key="1">
    <citation type="journal article" date="2015" name="Genome Announc.">
        <title>Genome sequence of Aspergillus flavus NRRL 3357, a strain that causes aflatoxin contamination of food and feed.</title>
        <authorList>
            <person name="Nierman W.C."/>
            <person name="Yu J."/>
            <person name="Fedorova-Abrams N.D."/>
            <person name="Losada L."/>
            <person name="Cleveland T.E."/>
            <person name="Bhatnagar D."/>
            <person name="Bennett J.W."/>
            <person name="Dean R."/>
            <person name="Payne G.A."/>
        </authorList>
    </citation>
    <scope>NUCLEOTIDE SEQUENCE [LARGE SCALE GENOMIC DNA]</scope>
    <source>
        <strain>ATCC 200026 / FGSC A1120 / IAM 13836 / NRRL 3357 / JCM 12722 / SRRC 167</strain>
    </source>
</reference>
<proteinExistence type="inferred from homology"/>
<name>FAEB2_ASPFN</name>
<comment type="function">
    <text evidence="3">Involved in degradation of plant cell walls. Hydrolyzes the feruloyl-arabinose ester bond in arabinoxylans as well as the feruloyl-galactose and feruloyl-arabinose ester bonds in pectin.</text>
</comment>
<comment type="catalytic activity">
    <reaction evidence="3">
        <text>feruloyl-polysaccharide + H2O = ferulate + polysaccharide.</text>
        <dbReference type="EC" id="3.1.1.73"/>
    </reaction>
</comment>
<comment type="subcellular location">
    <subcellularLocation>
        <location evidence="1">Secreted</location>
    </subcellularLocation>
</comment>
<comment type="similarity">
    <text evidence="5">Belongs to the tannase family.</text>
</comment>
<sequence>MKVSLWLTLLGVNLSLALAVGTDFPASCQAFSPDTRAANAHREFTEYVPAGTNLSLPYNDATCARPNQVVTVDLCRVALYVETSNRSSVTTEIWLPRNWTGRFLGTGNGGIDGCIKYEDLAYGAANGFAVVGSNNGHNGTTAASFYQNSDVLADFAWRALHLSTVIGKEITQAFYGEPHRKSYYLGCSLGGRQGINSAVEFPDDFDGIIAGSPAVDFNSLVSWRASFFPITGSANSTDFISVSTWKDLIHAEVLTQCDTLDCVNDGIIEDPSLCNFCPEALKCTDDRINNCLSPAQVEIVRKVFSPMYGEDGQLIFPAMQPGSELEAADQLYTGKPFRYSKEWFQYVVYNPSWDPAEFDIHDAKVADDLNPQNIRTWPNDLSNYEKRGGKIITFHGQQDGKITSFNTERFYNHLATAMNMSSSELDNFFRFFRISGMSHCSSGPGAWAFGQGGSPAPAMTPFNGNENILAALVAWVEHGVAPETITGTKYVDDNPELGISIRRSHCRFVIQLNHGRHELCY</sequence>
<feature type="signal peptide" evidence="4">
    <location>
        <begin position="1"/>
        <end position="19"/>
    </location>
</feature>
<feature type="chain" id="PRO_0000394928" description="Probable feruloyl esterase B-2">
    <location>
        <begin position="20"/>
        <end position="521"/>
    </location>
</feature>
<feature type="active site" description="Acyl-ester intermediate" evidence="2">
    <location>
        <position position="188"/>
    </location>
</feature>
<feature type="active site" description="Charge relay system" evidence="2">
    <location>
        <position position="399"/>
    </location>
</feature>
<feature type="active site" description="Charge relay system" evidence="2">
    <location>
        <position position="439"/>
    </location>
</feature>
<feature type="binding site" evidence="2">
    <location>
        <position position="258"/>
    </location>
    <ligand>
        <name>Ca(2+)</name>
        <dbReference type="ChEBI" id="CHEBI:29108"/>
    </ligand>
</feature>
<feature type="binding site" evidence="2">
    <location>
        <position position="261"/>
    </location>
    <ligand>
        <name>Ca(2+)</name>
        <dbReference type="ChEBI" id="CHEBI:29108"/>
    </ligand>
</feature>
<feature type="binding site" evidence="2">
    <location>
        <position position="263"/>
    </location>
    <ligand>
        <name>Ca(2+)</name>
        <dbReference type="ChEBI" id="CHEBI:29108"/>
    </ligand>
</feature>
<feature type="binding site" evidence="2">
    <location>
        <position position="265"/>
    </location>
    <ligand>
        <name>Ca(2+)</name>
        <dbReference type="ChEBI" id="CHEBI:29108"/>
    </ligand>
</feature>
<feature type="binding site" evidence="2">
    <location>
        <position position="267"/>
    </location>
    <ligand>
        <name>Ca(2+)</name>
        <dbReference type="ChEBI" id="CHEBI:29108"/>
    </ligand>
</feature>
<feature type="glycosylation site" description="N-linked (GlcNAc...) asparagine" evidence="4">
    <location>
        <position position="13"/>
    </location>
</feature>
<feature type="glycosylation site" description="N-linked (GlcNAc...) asparagine" evidence="4">
    <location>
        <position position="53"/>
    </location>
</feature>
<feature type="glycosylation site" description="N-linked (GlcNAc...) asparagine" evidence="4">
    <location>
        <position position="85"/>
    </location>
</feature>
<feature type="glycosylation site" description="N-linked (GlcNAc...) asparagine" evidence="4">
    <location>
        <position position="98"/>
    </location>
</feature>
<feature type="glycosylation site" description="N-linked (GlcNAc...) asparagine" evidence="4">
    <location>
        <position position="138"/>
    </location>
</feature>
<feature type="glycosylation site" description="N-linked (GlcNAc...) asparagine" evidence="4">
    <location>
        <position position="235"/>
    </location>
</feature>
<feature type="glycosylation site" description="N-linked (GlcNAc...) asparagine" evidence="4">
    <location>
        <position position="419"/>
    </location>
</feature>
<feature type="disulfide bond" evidence="2">
    <location>
        <begin position="28"/>
        <end position="75"/>
    </location>
</feature>
<feature type="disulfide bond" evidence="2">
    <location>
        <begin position="63"/>
        <end position="114"/>
    </location>
</feature>
<feature type="disulfide bond" evidence="2">
    <location>
        <begin position="187"/>
        <end position="440"/>
    </location>
</feature>
<feature type="disulfide bond" evidence="2">
    <location>
        <begin position="257"/>
        <end position="274"/>
    </location>
</feature>
<feature type="disulfide bond" evidence="2">
    <location>
        <begin position="283"/>
        <end position="291"/>
    </location>
</feature>
<feature type="disulfide bond" evidence="2">
    <location>
        <begin position="506"/>
        <end position="520"/>
    </location>
</feature>
<protein>
    <recommendedName>
        <fullName>Probable feruloyl esterase B-2</fullName>
        <ecNumber evidence="3">3.1.1.73</ecNumber>
    </recommendedName>
    <alternativeName>
        <fullName>Ferulic acid esterase B-2</fullName>
        <shortName>FAEB-2</shortName>
    </alternativeName>
</protein>
<evidence type="ECO:0000250" key="1"/>
<evidence type="ECO:0000250" key="2">
    <source>
        <dbReference type="UniProtKB" id="Q2UP89"/>
    </source>
</evidence>
<evidence type="ECO:0000250" key="3">
    <source>
        <dbReference type="UniProtKB" id="Q8WZI8"/>
    </source>
</evidence>
<evidence type="ECO:0000255" key="4"/>
<evidence type="ECO:0000305" key="5"/>